<geneLocation type="chloroplast"/>
<keyword id="KW-0150">Chloroplast</keyword>
<keyword id="KW-0472">Membrane</keyword>
<keyword id="KW-0602">Photosynthesis</keyword>
<keyword id="KW-0603">Photosystem I</keyword>
<keyword id="KW-0934">Plastid</keyword>
<keyword id="KW-0793">Thylakoid</keyword>
<keyword id="KW-0812">Transmembrane</keyword>
<keyword id="KW-1133">Transmembrane helix</keyword>
<organism>
    <name type="scientific">Phalaenopsis aphrodite subsp. formosana</name>
    <name type="common">Moth orchid</name>
    <dbReference type="NCBI Taxonomy" id="308872"/>
    <lineage>
        <taxon>Eukaryota</taxon>
        <taxon>Viridiplantae</taxon>
        <taxon>Streptophyta</taxon>
        <taxon>Embryophyta</taxon>
        <taxon>Tracheophyta</taxon>
        <taxon>Spermatophyta</taxon>
        <taxon>Magnoliopsida</taxon>
        <taxon>Liliopsida</taxon>
        <taxon>Asparagales</taxon>
        <taxon>Orchidaceae</taxon>
        <taxon>Epidendroideae</taxon>
        <taxon>Vandeae</taxon>
        <taxon>Aeridinae</taxon>
        <taxon>Phalaenopsis</taxon>
    </lineage>
</organism>
<sequence>MQDIKTYLSTAPVLTTLWFGSLAGLLIEINRLFPDALSFPFFSS</sequence>
<reference key="1">
    <citation type="journal article" date="2006" name="Mol. Biol. Evol.">
        <title>The chloroplast genome of Phalaenopsis aphrodite (Orchidaceae): comparative analysis of evolutionary rate with that of grasses and its phylogenetic implications.</title>
        <authorList>
            <person name="Chang C.-C."/>
            <person name="Lin H.-C."/>
            <person name="Lin I.-P."/>
            <person name="Chow T.-Y."/>
            <person name="Chen H.-H."/>
            <person name="Chen W.-H."/>
            <person name="Cheng C.-H."/>
            <person name="Lin C.-Y."/>
            <person name="Liu S.-M."/>
            <person name="Chang C.-C."/>
            <person name="Chaw S.-M."/>
        </authorList>
    </citation>
    <scope>NUCLEOTIDE SEQUENCE [LARGE SCALE GENOMIC DNA]</scope>
    <source>
        <strain>cv. Taisugar TS-97</strain>
    </source>
</reference>
<evidence type="ECO:0000255" key="1">
    <source>
        <dbReference type="HAMAP-Rule" id="MF_00522"/>
    </source>
</evidence>
<protein>
    <recommendedName>
        <fullName evidence="1">Photosystem I reaction center subunit IX</fullName>
    </recommendedName>
    <alternativeName>
        <fullName evidence="1">PSI-J</fullName>
    </alternativeName>
</protein>
<feature type="chain" id="PRO_0000276070" description="Photosystem I reaction center subunit IX">
    <location>
        <begin position="1"/>
        <end position="44"/>
    </location>
</feature>
<feature type="transmembrane region" description="Helical" evidence="1">
    <location>
        <begin position="7"/>
        <end position="27"/>
    </location>
</feature>
<dbReference type="EMBL" id="AY916449">
    <property type="protein sequence ID" value="AAW82520.1"/>
    <property type="molecule type" value="Genomic_DNA"/>
</dbReference>
<dbReference type="RefSeq" id="YP_358598.1">
    <property type="nucleotide sequence ID" value="NC_007499.1"/>
</dbReference>
<dbReference type="SMR" id="Q3BAM0"/>
<dbReference type="GeneID" id="3741701"/>
<dbReference type="GO" id="GO:0009535">
    <property type="term" value="C:chloroplast thylakoid membrane"/>
    <property type="evidence" value="ECO:0007669"/>
    <property type="project" value="UniProtKB-SubCell"/>
</dbReference>
<dbReference type="GO" id="GO:0009522">
    <property type="term" value="C:photosystem I"/>
    <property type="evidence" value="ECO:0007669"/>
    <property type="project" value="UniProtKB-KW"/>
</dbReference>
<dbReference type="GO" id="GO:0015979">
    <property type="term" value="P:photosynthesis"/>
    <property type="evidence" value="ECO:0007669"/>
    <property type="project" value="UniProtKB-UniRule"/>
</dbReference>
<dbReference type="FunFam" id="1.20.5.510:FF:000001">
    <property type="entry name" value="Photosystem I reaction center subunit IX"/>
    <property type="match status" value="1"/>
</dbReference>
<dbReference type="Gene3D" id="1.20.5.510">
    <property type="entry name" value="Single helix bin"/>
    <property type="match status" value="1"/>
</dbReference>
<dbReference type="HAMAP" id="MF_00522">
    <property type="entry name" value="PSI_PsaJ"/>
    <property type="match status" value="1"/>
</dbReference>
<dbReference type="InterPro" id="IPR002615">
    <property type="entry name" value="PSI_PsaJ"/>
</dbReference>
<dbReference type="InterPro" id="IPR036062">
    <property type="entry name" value="PSI_PsaJ_sf"/>
</dbReference>
<dbReference type="PANTHER" id="PTHR36082">
    <property type="match status" value="1"/>
</dbReference>
<dbReference type="PANTHER" id="PTHR36082:SF2">
    <property type="entry name" value="PHOTOSYSTEM I REACTION CENTER SUBUNIT IX"/>
    <property type="match status" value="1"/>
</dbReference>
<dbReference type="Pfam" id="PF01701">
    <property type="entry name" value="PSI_PsaJ"/>
    <property type="match status" value="1"/>
</dbReference>
<dbReference type="SUPFAM" id="SSF81544">
    <property type="entry name" value="Subunit IX of photosystem I reaction centre, PsaJ"/>
    <property type="match status" value="1"/>
</dbReference>
<gene>
    <name evidence="1" type="primary">psaJ</name>
</gene>
<name>PSAJ_PHAAO</name>
<proteinExistence type="inferred from homology"/>
<accession>Q3BAM0</accession>
<comment type="function">
    <text evidence="1">May help in the organization of the PsaE and PsaF subunits.</text>
</comment>
<comment type="subcellular location">
    <subcellularLocation>
        <location evidence="1">Plastid</location>
        <location evidence="1">Chloroplast thylakoid membrane</location>
        <topology evidence="1">Single-pass membrane protein</topology>
    </subcellularLocation>
</comment>
<comment type="similarity">
    <text evidence="1">Belongs to the PsaJ family.</text>
</comment>